<organism>
    <name type="scientific">Ureaplasma parvum serovar 3 (strain ATCC 700970)</name>
    <dbReference type="NCBI Taxonomy" id="273119"/>
    <lineage>
        <taxon>Bacteria</taxon>
        <taxon>Bacillati</taxon>
        <taxon>Mycoplasmatota</taxon>
        <taxon>Mycoplasmoidales</taxon>
        <taxon>Mycoplasmoidaceae</taxon>
        <taxon>Ureaplasma</taxon>
    </lineage>
</organism>
<comment type="function">
    <text evidence="1">Participates actively in the response to hyperosmotic and heat shock by preventing the aggregation of stress-denatured proteins, in association with DnaK and GrpE. It is the nucleotide exchange factor for DnaK and may function as a thermosensor. Unfolded proteins bind initially to DnaJ; upon interaction with the DnaJ-bound protein, DnaK hydrolyzes its bound ATP, resulting in the formation of a stable complex. GrpE releases ADP from DnaK; ATP binding to DnaK triggers the release of the substrate protein, thus completing the reaction cycle. Several rounds of ATP-dependent interactions between DnaJ, DnaK and GrpE are required for fully efficient folding.</text>
</comment>
<comment type="subunit">
    <text evidence="1">Homodimer.</text>
</comment>
<comment type="subcellular location">
    <subcellularLocation>
        <location evidence="1">Cytoplasm</location>
    </subcellularLocation>
</comment>
<comment type="similarity">
    <text evidence="1">Belongs to the GrpE family.</text>
</comment>
<keyword id="KW-0143">Chaperone</keyword>
<keyword id="KW-0963">Cytoplasm</keyword>
<keyword id="KW-1185">Reference proteome</keyword>
<keyword id="KW-0346">Stress response</keyword>
<evidence type="ECO:0000255" key="1">
    <source>
        <dbReference type="HAMAP-Rule" id="MF_01151"/>
    </source>
</evidence>
<evidence type="ECO:0000256" key="2">
    <source>
        <dbReference type="SAM" id="MobiDB-lite"/>
    </source>
</evidence>
<dbReference type="EMBL" id="AF222894">
    <property type="protein sequence ID" value="AAF30817.1"/>
    <property type="molecule type" value="Genomic_DNA"/>
</dbReference>
<dbReference type="RefSeq" id="WP_006688590.1">
    <property type="nucleotide sequence ID" value="NC_002162.1"/>
</dbReference>
<dbReference type="SMR" id="Q9PQ83"/>
<dbReference type="STRING" id="273119.UU406"/>
<dbReference type="EnsemblBacteria" id="AAF30817">
    <property type="protein sequence ID" value="AAF30817"/>
    <property type="gene ID" value="UU406"/>
</dbReference>
<dbReference type="GeneID" id="29672340"/>
<dbReference type="KEGG" id="uur:UU406"/>
<dbReference type="eggNOG" id="COG0576">
    <property type="taxonomic scope" value="Bacteria"/>
</dbReference>
<dbReference type="HOGENOM" id="CLU_1277163_0_0_14"/>
<dbReference type="OrthoDB" id="9812586at2"/>
<dbReference type="Proteomes" id="UP000000423">
    <property type="component" value="Chromosome"/>
</dbReference>
<dbReference type="GO" id="GO:0005737">
    <property type="term" value="C:cytoplasm"/>
    <property type="evidence" value="ECO:0007669"/>
    <property type="project" value="UniProtKB-SubCell"/>
</dbReference>
<dbReference type="GO" id="GO:0000774">
    <property type="term" value="F:adenyl-nucleotide exchange factor activity"/>
    <property type="evidence" value="ECO:0007669"/>
    <property type="project" value="InterPro"/>
</dbReference>
<dbReference type="GO" id="GO:0042803">
    <property type="term" value="F:protein homodimerization activity"/>
    <property type="evidence" value="ECO:0007669"/>
    <property type="project" value="InterPro"/>
</dbReference>
<dbReference type="GO" id="GO:0051087">
    <property type="term" value="F:protein-folding chaperone binding"/>
    <property type="evidence" value="ECO:0007669"/>
    <property type="project" value="InterPro"/>
</dbReference>
<dbReference type="GO" id="GO:0006457">
    <property type="term" value="P:protein folding"/>
    <property type="evidence" value="ECO:0007669"/>
    <property type="project" value="InterPro"/>
</dbReference>
<dbReference type="Gene3D" id="2.30.22.10">
    <property type="entry name" value="Head domain of nucleotide exchange factor GrpE"/>
    <property type="match status" value="1"/>
</dbReference>
<dbReference type="HAMAP" id="MF_01151">
    <property type="entry name" value="GrpE"/>
    <property type="match status" value="1"/>
</dbReference>
<dbReference type="InterPro" id="IPR000740">
    <property type="entry name" value="GrpE"/>
</dbReference>
<dbReference type="InterPro" id="IPR009012">
    <property type="entry name" value="GrpE_head"/>
</dbReference>
<dbReference type="Pfam" id="PF01025">
    <property type="entry name" value="GrpE"/>
    <property type="match status" value="1"/>
</dbReference>
<dbReference type="SUPFAM" id="SSF51064">
    <property type="entry name" value="Head domain of nucleotide exchange factor GrpE"/>
    <property type="match status" value="1"/>
</dbReference>
<gene>
    <name evidence="1" type="primary">grpE</name>
    <name type="ordered locus">UU406</name>
</gene>
<sequence>MSKNNENIKHQNNDKVNNQVDKKETKNHNKQEFKYKELYEHELKKNKELQNINTLLKDKNQQLEEQISQLNQDFIKQLETKAKQAQQILEQKVNELEARHEAKVNDAVFKIFKFKMEPLLDAINHFTKIVNQNYDDPKIQAFIEGFKMFSQNMIDGLDNLKITKISPQVNDSLNDEIMEVFEVVENTNKPSMHVVEVISDGFKYNDKVIKFAVVKVAK</sequence>
<name>GRPE_UREPA</name>
<accession>Q9PQ83</accession>
<feature type="chain" id="PRO_0000113890" description="Protein GrpE">
    <location>
        <begin position="1"/>
        <end position="218"/>
    </location>
</feature>
<feature type="region of interest" description="Disordered" evidence="2">
    <location>
        <begin position="1"/>
        <end position="32"/>
    </location>
</feature>
<feature type="compositionally biased region" description="Basic and acidic residues" evidence="2">
    <location>
        <begin position="1"/>
        <end position="13"/>
    </location>
</feature>
<feature type="compositionally biased region" description="Basic and acidic residues" evidence="2">
    <location>
        <begin position="20"/>
        <end position="32"/>
    </location>
</feature>
<protein>
    <recommendedName>
        <fullName evidence="1">Protein GrpE</fullName>
    </recommendedName>
    <alternativeName>
        <fullName evidence="1">HSP-70 cofactor</fullName>
    </alternativeName>
</protein>
<reference key="1">
    <citation type="journal article" date="2000" name="Nature">
        <title>The complete sequence of the mucosal pathogen Ureaplasma urealyticum.</title>
        <authorList>
            <person name="Glass J.I."/>
            <person name="Lefkowitz E.J."/>
            <person name="Glass J.S."/>
            <person name="Heiner C.R."/>
            <person name="Chen E.Y."/>
            <person name="Cassell G.H."/>
        </authorList>
    </citation>
    <scope>NUCLEOTIDE SEQUENCE [LARGE SCALE GENOMIC DNA]</scope>
    <source>
        <strain>ATCC 700970</strain>
    </source>
</reference>
<proteinExistence type="inferred from homology"/>